<dbReference type="EMBL" id="AE017143">
    <property type="protein sequence ID" value="AAP95742.1"/>
    <property type="molecule type" value="Genomic_DNA"/>
</dbReference>
<dbReference type="RefSeq" id="WP_010944792.1">
    <property type="nucleotide sequence ID" value="NC_002940.2"/>
</dbReference>
<dbReference type="SMR" id="Q7VMW1"/>
<dbReference type="STRING" id="233412.HD_0851"/>
<dbReference type="KEGG" id="hdu:HD_0851"/>
<dbReference type="eggNOG" id="COG0593">
    <property type="taxonomic scope" value="Bacteria"/>
</dbReference>
<dbReference type="HOGENOM" id="CLU_026910_0_1_6"/>
<dbReference type="Proteomes" id="UP000001022">
    <property type="component" value="Chromosome"/>
</dbReference>
<dbReference type="GO" id="GO:0005737">
    <property type="term" value="C:cytoplasm"/>
    <property type="evidence" value="ECO:0007669"/>
    <property type="project" value="UniProtKB-SubCell"/>
</dbReference>
<dbReference type="GO" id="GO:0005886">
    <property type="term" value="C:plasma membrane"/>
    <property type="evidence" value="ECO:0007669"/>
    <property type="project" value="TreeGrafter"/>
</dbReference>
<dbReference type="GO" id="GO:0005524">
    <property type="term" value="F:ATP binding"/>
    <property type="evidence" value="ECO:0007669"/>
    <property type="project" value="UniProtKB-UniRule"/>
</dbReference>
<dbReference type="GO" id="GO:0016887">
    <property type="term" value="F:ATP hydrolysis activity"/>
    <property type="evidence" value="ECO:0007669"/>
    <property type="project" value="InterPro"/>
</dbReference>
<dbReference type="GO" id="GO:0003688">
    <property type="term" value="F:DNA replication origin binding"/>
    <property type="evidence" value="ECO:0007669"/>
    <property type="project" value="UniProtKB-UniRule"/>
</dbReference>
<dbReference type="GO" id="GO:0008289">
    <property type="term" value="F:lipid binding"/>
    <property type="evidence" value="ECO:0007669"/>
    <property type="project" value="UniProtKB-KW"/>
</dbReference>
<dbReference type="GO" id="GO:0006270">
    <property type="term" value="P:DNA replication initiation"/>
    <property type="evidence" value="ECO:0007669"/>
    <property type="project" value="UniProtKB-UniRule"/>
</dbReference>
<dbReference type="GO" id="GO:0006275">
    <property type="term" value="P:regulation of DNA replication"/>
    <property type="evidence" value="ECO:0007669"/>
    <property type="project" value="UniProtKB-UniRule"/>
</dbReference>
<dbReference type="CDD" id="cd00009">
    <property type="entry name" value="AAA"/>
    <property type="match status" value="1"/>
</dbReference>
<dbReference type="CDD" id="cd06571">
    <property type="entry name" value="Bac_DnaA_C"/>
    <property type="match status" value="1"/>
</dbReference>
<dbReference type="FunFam" id="1.10.8.60:FF:000003">
    <property type="entry name" value="Chromosomal replication initiator protein DnaA"/>
    <property type="match status" value="1"/>
</dbReference>
<dbReference type="FunFam" id="3.40.50.300:FF:000668">
    <property type="entry name" value="Chromosomal replication initiator protein DnaA"/>
    <property type="match status" value="1"/>
</dbReference>
<dbReference type="Gene3D" id="1.10.1750.10">
    <property type="match status" value="1"/>
</dbReference>
<dbReference type="Gene3D" id="1.10.8.60">
    <property type="match status" value="1"/>
</dbReference>
<dbReference type="Gene3D" id="3.30.300.180">
    <property type="match status" value="1"/>
</dbReference>
<dbReference type="Gene3D" id="3.40.50.300">
    <property type="entry name" value="P-loop containing nucleotide triphosphate hydrolases"/>
    <property type="match status" value="1"/>
</dbReference>
<dbReference type="HAMAP" id="MF_00377">
    <property type="entry name" value="DnaA_bact"/>
    <property type="match status" value="1"/>
</dbReference>
<dbReference type="InterPro" id="IPR003593">
    <property type="entry name" value="AAA+_ATPase"/>
</dbReference>
<dbReference type="InterPro" id="IPR001957">
    <property type="entry name" value="Chromosome_initiator_DnaA"/>
</dbReference>
<dbReference type="InterPro" id="IPR020591">
    <property type="entry name" value="Chromosome_initiator_DnaA-like"/>
</dbReference>
<dbReference type="InterPro" id="IPR018312">
    <property type="entry name" value="Chromosome_initiator_DnaA_CS"/>
</dbReference>
<dbReference type="InterPro" id="IPR013159">
    <property type="entry name" value="DnaA_C"/>
</dbReference>
<dbReference type="InterPro" id="IPR013317">
    <property type="entry name" value="DnaA_dom"/>
</dbReference>
<dbReference type="InterPro" id="IPR024633">
    <property type="entry name" value="DnaA_N_dom"/>
</dbReference>
<dbReference type="InterPro" id="IPR038454">
    <property type="entry name" value="DnaA_N_sf"/>
</dbReference>
<dbReference type="InterPro" id="IPR055199">
    <property type="entry name" value="Hda_lid"/>
</dbReference>
<dbReference type="InterPro" id="IPR027417">
    <property type="entry name" value="P-loop_NTPase"/>
</dbReference>
<dbReference type="InterPro" id="IPR010921">
    <property type="entry name" value="Trp_repressor/repl_initiator"/>
</dbReference>
<dbReference type="NCBIfam" id="TIGR00362">
    <property type="entry name" value="DnaA"/>
    <property type="match status" value="1"/>
</dbReference>
<dbReference type="PANTHER" id="PTHR30050">
    <property type="entry name" value="CHROMOSOMAL REPLICATION INITIATOR PROTEIN DNAA"/>
    <property type="match status" value="1"/>
</dbReference>
<dbReference type="PANTHER" id="PTHR30050:SF2">
    <property type="entry name" value="CHROMOSOMAL REPLICATION INITIATOR PROTEIN DNAA"/>
    <property type="match status" value="1"/>
</dbReference>
<dbReference type="Pfam" id="PF00308">
    <property type="entry name" value="Bac_DnaA"/>
    <property type="match status" value="1"/>
</dbReference>
<dbReference type="Pfam" id="PF08299">
    <property type="entry name" value="Bac_DnaA_C"/>
    <property type="match status" value="1"/>
</dbReference>
<dbReference type="Pfam" id="PF11638">
    <property type="entry name" value="DnaA_N"/>
    <property type="match status" value="1"/>
</dbReference>
<dbReference type="Pfam" id="PF22688">
    <property type="entry name" value="Hda_lid"/>
    <property type="match status" value="1"/>
</dbReference>
<dbReference type="PRINTS" id="PR00051">
    <property type="entry name" value="DNAA"/>
</dbReference>
<dbReference type="SMART" id="SM00382">
    <property type="entry name" value="AAA"/>
    <property type="match status" value="1"/>
</dbReference>
<dbReference type="SMART" id="SM00760">
    <property type="entry name" value="Bac_DnaA_C"/>
    <property type="match status" value="1"/>
</dbReference>
<dbReference type="SUPFAM" id="SSF52540">
    <property type="entry name" value="P-loop containing nucleoside triphosphate hydrolases"/>
    <property type="match status" value="1"/>
</dbReference>
<dbReference type="SUPFAM" id="SSF48295">
    <property type="entry name" value="TrpR-like"/>
    <property type="match status" value="1"/>
</dbReference>
<dbReference type="PROSITE" id="PS01008">
    <property type="entry name" value="DNAA"/>
    <property type="match status" value="1"/>
</dbReference>
<comment type="function">
    <text evidence="1">Plays an essential role in the initiation and regulation of chromosomal replication. ATP-DnaA binds to the origin of replication (oriC) to initiate formation of the DNA replication initiation complex once per cell cycle. Binds the DnaA box (a 9 base pair repeat at the origin) and separates the double-stranded (ds)DNA. Forms a right-handed helical filament on oriC DNA; dsDNA binds to the exterior of the filament while single-stranded (ss)DNA is stabiized in the filament's interior. The ATP-DnaA-oriC complex binds and stabilizes one strand of the AT-rich DNA unwinding element (DUE), permitting loading of DNA polymerase. After initiation quickly degrades to an ADP-DnaA complex that is not apt for DNA replication. Binds acidic phospholipids.</text>
</comment>
<comment type="subunit">
    <text evidence="1">Oligomerizes as a right-handed, spiral filament on DNA at oriC.</text>
</comment>
<comment type="subcellular location">
    <subcellularLocation>
        <location evidence="1">Cytoplasm</location>
    </subcellularLocation>
</comment>
<comment type="domain">
    <text evidence="1">Domain I is involved in oligomerization and binding regulators, domain II is flexibile and of varying length in different bacteria, domain III forms the AAA+ region, while domain IV binds dsDNA.</text>
</comment>
<comment type="similarity">
    <text evidence="1">Belongs to the DnaA family.</text>
</comment>
<accession>Q7VMW1</accession>
<name>DNAA_HAEDU</name>
<keyword id="KW-0067">ATP-binding</keyword>
<keyword id="KW-0963">Cytoplasm</keyword>
<keyword id="KW-0235">DNA replication</keyword>
<keyword id="KW-0238">DNA-binding</keyword>
<keyword id="KW-0446">Lipid-binding</keyword>
<keyword id="KW-0547">Nucleotide-binding</keyword>
<keyword id="KW-1185">Reference proteome</keyword>
<organism>
    <name type="scientific">Haemophilus ducreyi (strain 35000HP / ATCC 700724)</name>
    <dbReference type="NCBI Taxonomy" id="233412"/>
    <lineage>
        <taxon>Bacteria</taxon>
        <taxon>Pseudomonadati</taxon>
        <taxon>Pseudomonadota</taxon>
        <taxon>Gammaproteobacteria</taxon>
        <taxon>Pasteurellales</taxon>
        <taxon>Pasteurellaceae</taxon>
        <taxon>Haemophilus</taxon>
    </lineage>
</organism>
<protein>
    <recommendedName>
        <fullName evidence="1">Chromosomal replication initiator protein DnaA</fullName>
    </recommendedName>
</protein>
<evidence type="ECO:0000255" key="1">
    <source>
        <dbReference type="HAMAP-Rule" id="MF_00377"/>
    </source>
</evidence>
<feature type="chain" id="PRO_0000114185" description="Chromosomal replication initiator protein DnaA">
    <location>
        <begin position="1"/>
        <end position="448"/>
    </location>
</feature>
<feature type="region of interest" description="Domain I, interacts with DnaA modulators" evidence="1">
    <location>
        <begin position="1"/>
        <end position="93"/>
    </location>
</feature>
<feature type="region of interest" description="Domain II" evidence="1">
    <location>
        <begin position="94"/>
        <end position="110"/>
    </location>
</feature>
<feature type="region of interest" description="Domain III, AAA+ region" evidence="1">
    <location>
        <begin position="111"/>
        <end position="328"/>
    </location>
</feature>
<feature type="region of interest" description="Domain IV, binds dsDNA" evidence="1">
    <location>
        <begin position="329"/>
        <end position="448"/>
    </location>
</feature>
<feature type="binding site" evidence="1">
    <location>
        <position position="156"/>
    </location>
    <ligand>
        <name>ATP</name>
        <dbReference type="ChEBI" id="CHEBI:30616"/>
    </ligand>
</feature>
<feature type="binding site" evidence="1">
    <location>
        <position position="158"/>
    </location>
    <ligand>
        <name>ATP</name>
        <dbReference type="ChEBI" id="CHEBI:30616"/>
    </ligand>
</feature>
<feature type="binding site" evidence="1">
    <location>
        <position position="159"/>
    </location>
    <ligand>
        <name>ATP</name>
        <dbReference type="ChEBI" id="CHEBI:30616"/>
    </ligand>
</feature>
<feature type="binding site" evidence="1">
    <location>
        <position position="160"/>
    </location>
    <ligand>
        <name>ATP</name>
        <dbReference type="ChEBI" id="CHEBI:30616"/>
    </ligand>
</feature>
<gene>
    <name evidence="1" type="primary">dnaA</name>
    <name type="ordered locus">HD_0851</name>
</gene>
<sequence>MEQIVSSLWSDCLNHLQTKVSPIDYSTWLRPLQASFANEELTLYAQNPFVENWVKDKFLTEIIDLARFLSKNEQLKITIRVGNKPTEQNLSASSTNKEELTQDTVHKFKTGLNGRLTFDNFVQGKSNQLAKAVAQQVADNPGESHCNPFSLYGGTGLGKTHLLHAVGNEILKRNPQARVVYIHSERFVQDMVKALKNNTIENFKKFYRSLDVLMIDDIQFFAKKEASQEEFFHTFNSLFERNKQIILASDHFPKNIENIEERIKSRLNWGVSTAIEPPELETRVAILMKKAEERNVELPEEVAFYLGQKLRTNVRELEGAINRVSAWCNFTKRQITIDAVRETLKDLIASYDHLVTIENIQKIVAEYYNIKMADLKSKSRTRSIARPRQMAMALAKELTSHSLPEIGREFGGRDHTTVMHACKTINELRDTDNSIQEDYTNLTRKLSS</sequence>
<proteinExistence type="inferred from homology"/>
<reference key="1">
    <citation type="submission" date="2003-06" db="EMBL/GenBank/DDBJ databases">
        <title>The complete genome sequence of Haemophilus ducreyi.</title>
        <authorList>
            <person name="Munson R.S. Jr."/>
            <person name="Ray W.C."/>
            <person name="Mahairas G."/>
            <person name="Sabo P."/>
            <person name="Mungur R."/>
            <person name="Johnson L."/>
            <person name="Nguyen D."/>
            <person name="Wang J."/>
            <person name="Forst C."/>
            <person name="Hood L."/>
        </authorList>
    </citation>
    <scope>NUCLEOTIDE SEQUENCE [LARGE SCALE GENOMIC DNA]</scope>
    <source>
        <strain>35000HP / ATCC 700724</strain>
    </source>
</reference>